<dbReference type="EMBL" id="M18384">
    <property type="protein sequence ID" value="AAA43698.1"/>
    <property type="molecule type" value="Genomic_RNA"/>
</dbReference>
<dbReference type="EMBL" id="X17222">
    <property type="protein sequence ID" value="CAA35095.1"/>
    <property type="molecule type" value="Genomic_RNA"/>
</dbReference>
<dbReference type="SMR" id="P10757"/>
<dbReference type="GlyCosmos" id="P10757">
    <property type="glycosylation" value="10 sites, No reported glycans"/>
</dbReference>
<dbReference type="GO" id="GO:0020002">
    <property type="term" value="C:host cell plasma membrane"/>
    <property type="evidence" value="ECO:0007669"/>
    <property type="project" value="UniProtKB-SubCell"/>
</dbReference>
<dbReference type="GO" id="GO:0016020">
    <property type="term" value="C:membrane"/>
    <property type="evidence" value="ECO:0007669"/>
    <property type="project" value="UniProtKB-UniRule"/>
</dbReference>
<dbReference type="GO" id="GO:0019031">
    <property type="term" value="C:viral envelope"/>
    <property type="evidence" value="ECO:0007669"/>
    <property type="project" value="UniProtKB-UniRule"/>
</dbReference>
<dbReference type="GO" id="GO:0055036">
    <property type="term" value="C:virion membrane"/>
    <property type="evidence" value="ECO:0007669"/>
    <property type="project" value="UniProtKB-SubCell"/>
</dbReference>
<dbReference type="GO" id="GO:0046789">
    <property type="term" value="F:host cell surface receptor binding"/>
    <property type="evidence" value="ECO:0007669"/>
    <property type="project" value="UniProtKB-UniRule"/>
</dbReference>
<dbReference type="GO" id="GO:0075509">
    <property type="term" value="P:endocytosis involved in viral entry into host cell"/>
    <property type="evidence" value="ECO:0007669"/>
    <property type="project" value="UniProtKB-KW"/>
</dbReference>
<dbReference type="GO" id="GO:0039654">
    <property type="term" value="P:fusion of virus membrane with host endosome membrane"/>
    <property type="evidence" value="ECO:0007669"/>
    <property type="project" value="UniProtKB-UniRule"/>
</dbReference>
<dbReference type="GO" id="GO:0019064">
    <property type="term" value="P:fusion of virus membrane with host plasma membrane"/>
    <property type="evidence" value="ECO:0007669"/>
    <property type="project" value="InterPro"/>
</dbReference>
<dbReference type="GO" id="GO:0046761">
    <property type="term" value="P:viral budding from plasma membrane"/>
    <property type="evidence" value="ECO:0007669"/>
    <property type="project" value="UniProtKB-UniRule"/>
</dbReference>
<dbReference type="GO" id="GO:0019062">
    <property type="term" value="P:virion attachment to host cell"/>
    <property type="evidence" value="ECO:0007669"/>
    <property type="project" value="UniProtKB-KW"/>
</dbReference>
<dbReference type="Gene3D" id="3.90.20.10">
    <property type="match status" value="1"/>
</dbReference>
<dbReference type="Gene3D" id="3.90.209.20">
    <property type="match status" value="1"/>
</dbReference>
<dbReference type="Gene3D" id="2.10.77.10">
    <property type="entry name" value="Hemagglutinin Chain A, Domain 2"/>
    <property type="match status" value="1"/>
</dbReference>
<dbReference type="HAMAP" id="MF_04072">
    <property type="entry name" value="INFV_HEMA"/>
    <property type="match status" value="1"/>
</dbReference>
<dbReference type="InterPro" id="IPR008980">
    <property type="entry name" value="Capsid_hemagglutn"/>
</dbReference>
<dbReference type="InterPro" id="IPR013828">
    <property type="entry name" value="Hemagglutn_HA1_a/b_dom_sf"/>
</dbReference>
<dbReference type="InterPro" id="IPR001364">
    <property type="entry name" value="Hemagglutn_influenz_A/B"/>
</dbReference>
<dbReference type="InterPro" id="IPR000386">
    <property type="entry name" value="Hemagglutn_influenz_B"/>
</dbReference>
<dbReference type="Pfam" id="PF00509">
    <property type="entry name" value="Hemagglutinin"/>
    <property type="match status" value="1"/>
</dbReference>
<dbReference type="PRINTS" id="PR00329">
    <property type="entry name" value="HEMAGGLUTN12"/>
</dbReference>
<dbReference type="PRINTS" id="PR00331">
    <property type="entry name" value="HEMAGGLUTN2"/>
</dbReference>
<dbReference type="SUPFAM" id="SSF58064">
    <property type="entry name" value="Influenza hemagglutinin (stalk)"/>
    <property type="match status" value="1"/>
</dbReference>
<dbReference type="SUPFAM" id="SSF49818">
    <property type="entry name" value="Viral protein domain"/>
    <property type="match status" value="1"/>
</dbReference>
<comment type="function">
    <text evidence="1">Binds to sialic acid-containing receptors on the cell surface, bringing about the attachment of the virus particle to the cell. Plays a major role in the determination of host range restriction and virulence. Class I viral fusion protein. Responsible for penetration of the virus into the cell cytoplasm by mediating the fusion of the membrane of the endocytosed virus particle with the endosomal membrane. Low pH in endosomes induce an irreversible conformational change in HA2, releasing the fusion hydrophobic peptide. Several trimers are required to form a competent fusion pore.</text>
</comment>
<comment type="subunit">
    <text evidence="1">Homotrimer of disulfide-linked HA1-HA2.</text>
</comment>
<comment type="subcellular location">
    <subcellularLocation>
        <location evidence="1">Virion membrane</location>
        <topology evidence="1">Single-pass type I membrane protein</topology>
    </subcellularLocation>
    <subcellularLocation>
        <location evidence="1">Host apical cell membrane</location>
        <topology evidence="1">Single-pass type I membrane protein</topology>
    </subcellularLocation>
    <text evidence="1">Targeted to the apical plasma membrane in epithelial polarized cells through a signal present in the transmembrane domain. Associated with glycosphingolipid- and cholesterol-enriched detergent-resistant lipid rafts.</text>
</comment>
<comment type="PTM">
    <text evidence="1">Palmitoylated.</text>
</comment>
<comment type="PTM">
    <text evidence="1">In natural infection, inactive HA is matured into HA1 and HA2 outside the cell by one or more trypsin-like, arginine-specific endoprotease secreted by the bronchial epithelial cells. One identified protease that may be involved in this process is secreted in lungs by club cells.</text>
</comment>
<comment type="miscellaneous">
    <text>Major glycoprotein, comprises over 80% of the envelope proteins present in virus particle.</text>
</comment>
<comment type="miscellaneous">
    <text>The extent of infection into host organism is determined by HA. Influenza viruses bud from the apical surface of polarized epithelial cells (e.g. bronchial epithelial cells) into lumen of lungs and are therefore usually pneumotropic. The reason is that HA is cleaved by tryptase clara which is restricted to lungs. However, HAs of H5 and H7 pantropic avian viruses subtypes can be cleaved by furin and subtilisin-type enzymes, allowing the virus to grow in other organs than lungs.</text>
</comment>
<comment type="miscellaneous">
    <text evidence="2">The influenza B genome consist of 8 RNA segments. Genetic variation of hemagglutinin and/or neuraminidase genes results in the emergence of new influenza strains. The mechanism of variation can be the result of point mutations or the result of genetic reassortment between segments of two different strains.</text>
</comment>
<comment type="similarity">
    <text evidence="1">Belongs to the influenza viruses hemagglutinin family.</text>
</comment>
<name>HEMA_INBEN</name>
<gene>
    <name evidence="1" type="primary">HA</name>
</gene>
<keyword id="KW-1015">Disulfide bond</keyword>
<keyword id="KW-1170">Fusion of virus membrane with host endosomal membrane</keyword>
<keyword id="KW-1168">Fusion of virus membrane with host membrane</keyword>
<keyword id="KW-0325">Glycoprotein</keyword>
<keyword id="KW-0348">Hemagglutinin</keyword>
<keyword id="KW-1032">Host cell membrane</keyword>
<keyword id="KW-1043">Host membrane</keyword>
<keyword id="KW-0945">Host-virus interaction</keyword>
<keyword id="KW-0449">Lipoprotein</keyword>
<keyword id="KW-0472">Membrane</keyword>
<keyword id="KW-0564">Palmitate</keyword>
<keyword id="KW-0732">Signal</keyword>
<keyword id="KW-0812">Transmembrane</keyword>
<keyword id="KW-1133">Transmembrane helix</keyword>
<keyword id="KW-1161">Viral attachment to host cell</keyword>
<keyword id="KW-0261">Viral envelope protein</keyword>
<keyword id="KW-1162">Viral penetration into host cytoplasm</keyword>
<keyword id="KW-0946">Virion</keyword>
<keyword id="KW-1164">Virus endocytosis by host</keyword>
<keyword id="KW-1160">Virus entry into host cell</keyword>
<feature type="signal peptide" evidence="1">
    <location>
        <begin position="1"/>
        <end position="15"/>
    </location>
</feature>
<feature type="chain" id="PRO_0000440546" description="Hemagglutinin" evidence="1">
    <location>
        <begin position="16"/>
        <end position="583"/>
    </location>
</feature>
<feature type="chain" id="PRO_0000039091" description="Hemagglutinin HA1 chain" evidence="1">
    <location>
        <begin position="16"/>
        <end position="359"/>
    </location>
</feature>
<feature type="chain" id="PRO_0000039092" description="Hemagglutinin HA2 chain" evidence="1">
    <location>
        <begin position="361"/>
        <end position="583"/>
    </location>
</feature>
<feature type="topological domain" description="Extracellular" evidence="1">
    <location>
        <begin position="16"/>
        <end position="551"/>
    </location>
</feature>
<feature type="transmembrane region" description="Helical" evidence="1">
    <location>
        <begin position="552"/>
        <end position="572"/>
    </location>
</feature>
<feature type="topological domain" description="Cytoplasmic" evidence="1">
    <location>
        <begin position="573"/>
        <end position="583"/>
    </location>
</feature>
<feature type="site" description="Cleavage; by host" evidence="1">
    <location>
        <begin position="360"/>
        <end position="361"/>
    </location>
</feature>
<feature type="lipid moiety-binding region" description="S-palmitoyl cysteine; by host" evidence="1">
    <location>
        <position position="579"/>
    </location>
</feature>
<feature type="lipid moiety-binding region" description="S-palmitoyl cysteine; by host" evidence="1">
    <location>
        <position position="582"/>
    </location>
</feature>
<feature type="glycosylation site" description="N-linked (GlcNAc...) asparagine; by host" evidence="1">
    <location>
        <position position="40"/>
    </location>
</feature>
<feature type="glycosylation site" description="N-linked (GlcNAc...) asparagine; by host" evidence="1">
    <location>
        <position position="74"/>
    </location>
</feature>
<feature type="glycosylation site" description="N-linked (GlcNAc...) asparagine; by host" evidence="1">
    <location>
        <position position="160"/>
    </location>
</feature>
<feature type="glycosylation site" description="N-linked (GlcNAc...) asparagine; by host" evidence="1">
    <location>
        <position position="179"/>
    </location>
</feature>
<feature type="glycosylation site" description="N-linked (GlcNAc...) asparagine; by host" evidence="1">
    <location>
        <position position="246"/>
    </location>
</feature>
<feature type="glycosylation site" description="N-linked (GlcNAc...) asparagine; by host" evidence="1">
    <location>
        <position position="317"/>
    </location>
</feature>
<feature type="glycosylation site" description="N-linked (GlcNAc...) asparagine; by host" evidence="1">
    <location>
        <position position="346"/>
    </location>
</feature>
<feature type="glycosylation site" description="N-linked (GlcNAc...) asparagine; by host" evidence="1">
    <location>
        <position position="505"/>
    </location>
</feature>
<feature type="glycosylation site" description="N-linked (GlcNAc...) asparagine; by host" evidence="1">
    <location>
        <position position="531"/>
    </location>
</feature>
<feature type="glycosylation site" description="N-linked (GlcNAc...) asparagine; by host" evidence="1">
    <location>
        <position position="544"/>
    </location>
</feature>
<feature type="disulfide bond" description="Interchain (between HA1 and HA2 chains)" evidence="1">
    <location>
        <begin position="19"/>
        <end position="497"/>
    </location>
</feature>
<feature type="disulfide bond" evidence="1">
    <location>
        <begin position="75"/>
        <end position="87"/>
    </location>
</feature>
<feature type="disulfide bond" evidence="1">
    <location>
        <begin position="109"/>
        <end position="158"/>
    </location>
</feature>
<feature type="disulfide bond" evidence="1">
    <location>
        <begin position="504"/>
        <end position="508"/>
    </location>
</feature>
<feature type="sequence conflict" description="In Ref. 2; CAA35095." evidence="2" ref="2">
    <original>A</original>
    <variation>P</variation>
    <location>
        <position position="15"/>
    </location>
</feature>
<feature type="sequence conflict" description="In Ref. 2; CAA35095." evidence="2" ref="2">
    <original>A</original>
    <variation>G</variation>
    <location>
        <position position="83"/>
    </location>
</feature>
<feature type="sequence conflict" description="In Ref. 2; CAA35095." evidence="2" ref="2">
    <original>I</original>
    <variation>T</variation>
    <location>
        <position position="212"/>
    </location>
</feature>
<organism>
    <name type="scientific">Influenza B virus (strain B/England/222/1982)</name>
    <dbReference type="NCBI Taxonomy" id="11527"/>
    <lineage>
        <taxon>Viruses</taxon>
        <taxon>Riboviria</taxon>
        <taxon>Orthornavirae</taxon>
        <taxon>Negarnaviricota</taxon>
        <taxon>Polyploviricotina</taxon>
        <taxon>Insthoviricetes</taxon>
        <taxon>Articulavirales</taxon>
        <taxon>Orthomyxoviridae</taxon>
        <taxon>Betainfluenzavirus</taxon>
        <taxon>Betainfluenzavirus influenzae</taxon>
        <taxon>Influenza B virus</taxon>
    </lineage>
</organism>
<reference key="1">
    <citation type="journal article" date="1987" name="Virology">
        <title>Comparison of the immune response to variant influenza type B hemagglutinins expressed in vaccinia virus.</title>
        <authorList>
            <person name="Rota P.A."/>
            <person name="Shaw M.W."/>
            <person name="Kendal A.P."/>
        </authorList>
    </citation>
    <scope>NUCLEOTIDE SEQUENCE [GENOMIC RNA]</scope>
</reference>
<reference key="2">
    <citation type="journal article" date="1987" name="Virology">
        <title>Structural changes in the haemagglutinin which accompany egg adaptation of an influenza A(H1N1) virus.</title>
        <authorList>
            <person name="Robertson J.S."/>
            <person name="Newman R."/>
            <person name="Oxford J.S."/>
            <person name="Daniels R.S."/>
            <person name="Webster R.G."/>
            <person name="Schild G.C."/>
        </authorList>
    </citation>
    <scope>NUCLEOTIDE SEQUENCE [GENOMIC RNA] OF 6-583</scope>
</reference>
<organismHost>
    <name type="scientific">Homo sapiens</name>
    <name type="common">Human</name>
    <dbReference type="NCBI Taxonomy" id="9606"/>
</organismHost>
<proteinExistence type="inferred from homology"/>
<protein>
    <recommendedName>
        <fullName evidence="1">Hemagglutinin</fullName>
    </recommendedName>
    <component>
        <recommendedName>
            <fullName evidence="1">Hemagglutinin HA1 chain</fullName>
        </recommendedName>
    </component>
    <component>
        <recommendedName>
            <fullName evidence="1">Hemagglutinin HA2 chain</fullName>
        </recommendedName>
    </component>
</protein>
<evidence type="ECO:0000255" key="1">
    <source>
        <dbReference type="HAMAP-Rule" id="MF_04072"/>
    </source>
</evidence>
<evidence type="ECO:0000305" key="2"/>
<sequence>MKAIIVLLMVVTSNADRICTGITSSNSPHVVKTATQGEVNVTGVIPLTTTPTKSHFANLKGTKTRGKLCPNCLNCTDLDVALARPKCMGTIPSAKASILHEVKPVTSGCFPIMHDRTKIRQLPNLLRGYENIKLSTRNVINAERAPGGPYIIGTSGSCPNVTNGNGFFATMAWAVPKDNKTATNPLTVEVPYICTKGEDQITVWGFHSDNAIQMVKLYGDSKPQKFTSSANGVTTHYVSQIGGFPNQTEDGGLPQSGRIVVDYMVQKPGKTGTIVYQRGVLLPQKVWCASGRSKVIKGSLPLIGEADCLHEKYGGLNKSKPYYTGEHAKAIGNCPIWVKTPLKLANGTKYRPPAKLLKERGFFGAIAGFLEGGWEGMIAGWHGYTSHGAHGVAVAADLKSTQEAINKITKNLNSLSELEVKNLQRLSGAMDELHNEILELDEKVDDLRADTISSQIELAVLLSNEGIINSEDEHLLALERKLKKMLGPSAVDIGNGCFETKHKCNQTCLDRIAAGTFNAGEFSLPTFDSLNITAASLNDDGLDNHTILLYYSTAASSLAVTLMIAIFIVYMVSRDNVSCSICL</sequence>
<accession>P10757</accession>